<proteinExistence type="inferred from homology"/>
<name>RF1_RHOJR</name>
<sequence>MAGTTQPSAIDDILAEHAGLEQQLADPALHNDPSAARKAGKRFAELAPIMATYAKLKSAQDDLDAARELAADDSSFAAEVPELEAQVLELDKALTDLLAPRDPHDGDDVVLEVKSGEGGEESALFASDLARMYVRYAERHGWRVEILDATVSDLGGYKDATLSIKSKGDVRDGVWARLKFEGGVHRVQRVPVTESQGRVHTSAAGVLIYPEPEEVEEVQIDETDLRIDVYRSSGKGGQGVNTTDSAVRITHLPTGIVVTCQNERSQLQNKARAMQVLAARLQAAAEEAADAEASAGRQSQVRTVDRSERIRTYNFPENRITDHRIGFKSHNLDAVLDGELDALLDALGKSDREARLAAE</sequence>
<reference key="1">
    <citation type="journal article" date="2006" name="Proc. Natl. Acad. Sci. U.S.A.">
        <title>The complete genome of Rhodococcus sp. RHA1 provides insights into a catabolic powerhouse.</title>
        <authorList>
            <person name="McLeod M.P."/>
            <person name="Warren R.L."/>
            <person name="Hsiao W.W.L."/>
            <person name="Araki N."/>
            <person name="Myhre M."/>
            <person name="Fernandes C."/>
            <person name="Miyazawa D."/>
            <person name="Wong W."/>
            <person name="Lillquist A.L."/>
            <person name="Wang D."/>
            <person name="Dosanjh M."/>
            <person name="Hara H."/>
            <person name="Petrescu A."/>
            <person name="Morin R.D."/>
            <person name="Yang G."/>
            <person name="Stott J.M."/>
            <person name="Schein J.E."/>
            <person name="Shin H."/>
            <person name="Smailus D."/>
            <person name="Siddiqui A.S."/>
            <person name="Marra M.A."/>
            <person name="Jones S.J.M."/>
            <person name="Holt R."/>
            <person name="Brinkman F.S.L."/>
            <person name="Miyauchi K."/>
            <person name="Fukuda M."/>
            <person name="Davies J.E."/>
            <person name="Mohn W.W."/>
            <person name="Eltis L.D."/>
        </authorList>
    </citation>
    <scope>NUCLEOTIDE SEQUENCE [LARGE SCALE GENOMIC DNA]</scope>
    <source>
        <strain>RHA1</strain>
    </source>
</reference>
<comment type="function">
    <text evidence="1">Peptide chain release factor 1 directs the termination of translation in response to the peptide chain termination codons UAG and UAA.</text>
</comment>
<comment type="subcellular location">
    <subcellularLocation>
        <location evidence="1">Cytoplasm</location>
    </subcellularLocation>
</comment>
<comment type="PTM">
    <text evidence="1">Methylated by PrmC. Methylation increases the termination efficiency of RF1.</text>
</comment>
<comment type="similarity">
    <text evidence="1">Belongs to the prokaryotic/mitochondrial release factor family.</text>
</comment>
<protein>
    <recommendedName>
        <fullName evidence="1">Peptide chain release factor 1</fullName>
        <shortName evidence="1">RF-1</shortName>
    </recommendedName>
</protein>
<accession>Q0SGN8</accession>
<dbReference type="EMBL" id="CP000431">
    <property type="protein sequence ID" value="ABG93298.1"/>
    <property type="molecule type" value="Genomic_DNA"/>
</dbReference>
<dbReference type="RefSeq" id="WP_011594475.1">
    <property type="nucleotide sequence ID" value="NC_008268.1"/>
</dbReference>
<dbReference type="SMR" id="Q0SGN8"/>
<dbReference type="KEGG" id="rha:RHA1_ro01483"/>
<dbReference type="PATRIC" id="fig|101510.16.peg.1502"/>
<dbReference type="eggNOG" id="COG0216">
    <property type="taxonomic scope" value="Bacteria"/>
</dbReference>
<dbReference type="HOGENOM" id="CLU_036856_0_1_11"/>
<dbReference type="OrthoDB" id="9806673at2"/>
<dbReference type="Proteomes" id="UP000008710">
    <property type="component" value="Chromosome"/>
</dbReference>
<dbReference type="GO" id="GO:0005737">
    <property type="term" value="C:cytoplasm"/>
    <property type="evidence" value="ECO:0007669"/>
    <property type="project" value="UniProtKB-SubCell"/>
</dbReference>
<dbReference type="GO" id="GO:0016149">
    <property type="term" value="F:translation release factor activity, codon specific"/>
    <property type="evidence" value="ECO:0007669"/>
    <property type="project" value="UniProtKB-UniRule"/>
</dbReference>
<dbReference type="FunFam" id="3.30.160.20:FF:000004">
    <property type="entry name" value="Peptide chain release factor 1"/>
    <property type="match status" value="1"/>
</dbReference>
<dbReference type="Gene3D" id="3.30.160.20">
    <property type="match status" value="1"/>
</dbReference>
<dbReference type="Gene3D" id="3.30.70.1660">
    <property type="match status" value="1"/>
</dbReference>
<dbReference type="Gene3D" id="6.10.140.1950">
    <property type="match status" value="1"/>
</dbReference>
<dbReference type="HAMAP" id="MF_00093">
    <property type="entry name" value="Rel_fac_1"/>
    <property type="match status" value="1"/>
</dbReference>
<dbReference type="InterPro" id="IPR005139">
    <property type="entry name" value="PCRF"/>
</dbReference>
<dbReference type="InterPro" id="IPR000352">
    <property type="entry name" value="Pep_chain_release_fac_I"/>
</dbReference>
<dbReference type="InterPro" id="IPR045853">
    <property type="entry name" value="Pep_chain_release_fac_I_sf"/>
</dbReference>
<dbReference type="InterPro" id="IPR050057">
    <property type="entry name" value="Prokaryotic/Mito_RF"/>
</dbReference>
<dbReference type="InterPro" id="IPR004373">
    <property type="entry name" value="RF-1"/>
</dbReference>
<dbReference type="NCBIfam" id="TIGR00019">
    <property type="entry name" value="prfA"/>
    <property type="match status" value="1"/>
</dbReference>
<dbReference type="NCBIfam" id="NF001859">
    <property type="entry name" value="PRK00591.1"/>
    <property type="match status" value="1"/>
</dbReference>
<dbReference type="PANTHER" id="PTHR43804">
    <property type="entry name" value="LD18447P"/>
    <property type="match status" value="1"/>
</dbReference>
<dbReference type="PANTHER" id="PTHR43804:SF7">
    <property type="entry name" value="LD18447P"/>
    <property type="match status" value="1"/>
</dbReference>
<dbReference type="Pfam" id="PF03462">
    <property type="entry name" value="PCRF"/>
    <property type="match status" value="1"/>
</dbReference>
<dbReference type="Pfam" id="PF00472">
    <property type="entry name" value="RF-1"/>
    <property type="match status" value="1"/>
</dbReference>
<dbReference type="SMART" id="SM00937">
    <property type="entry name" value="PCRF"/>
    <property type="match status" value="1"/>
</dbReference>
<dbReference type="SUPFAM" id="SSF75620">
    <property type="entry name" value="Release factor"/>
    <property type="match status" value="1"/>
</dbReference>
<dbReference type="PROSITE" id="PS00745">
    <property type="entry name" value="RF_PROK_I"/>
    <property type="match status" value="1"/>
</dbReference>
<keyword id="KW-0963">Cytoplasm</keyword>
<keyword id="KW-0488">Methylation</keyword>
<keyword id="KW-0648">Protein biosynthesis</keyword>
<evidence type="ECO:0000255" key="1">
    <source>
        <dbReference type="HAMAP-Rule" id="MF_00093"/>
    </source>
</evidence>
<feature type="chain" id="PRO_0000263332" description="Peptide chain release factor 1">
    <location>
        <begin position="1"/>
        <end position="359"/>
    </location>
</feature>
<feature type="modified residue" description="N5-methylglutamine" evidence="1">
    <location>
        <position position="238"/>
    </location>
</feature>
<gene>
    <name evidence="1" type="primary">prfA</name>
    <name type="ordered locus">RHA1_ro01483</name>
</gene>
<organism>
    <name type="scientific">Rhodococcus jostii (strain RHA1)</name>
    <dbReference type="NCBI Taxonomy" id="101510"/>
    <lineage>
        <taxon>Bacteria</taxon>
        <taxon>Bacillati</taxon>
        <taxon>Actinomycetota</taxon>
        <taxon>Actinomycetes</taxon>
        <taxon>Mycobacteriales</taxon>
        <taxon>Nocardiaceae</taxon>
        <taxon>Rhodococcus</taxon>
    </lineage>
</organism>